<protein>
    <recommendedName>
        <fullName evidence="1">UDP-3-O-acylglucosamine N-acyltransferase</fullName>
        <ecNumber evidence="1">2.3.1.191</ecNumber>
    </recommendedName>
</protein>
<accession>Q254I9</accession>
<sequence length="359" mass="38886">MPQELVYTLQQLADLLKVEVQGNTETPISGVEEISEAQSHHVTFLDNEKYSRFIKNTEAGAIILSKAQAQKYGHLNKNFLIVSEFPSIAFQKCIELFIPPIDSGFPGIHPTAVIHPTAHIGKDVFLEPYAVICQHAQIGDSSHIGAGSVIGAFSTLGEHCYVHPKVVIRERVVIGKRVIVQPGAIIGACGFGYITNAFGRHKHLKHLGQVIIEDDVEIGANTTIDRGRFKNSVIREGTKIDNQVQIAHHVEVGKHSMIVAQAGIAGSTKIGNHVIIGGQTGITGHISITDHVIMMAQTGVTKSISSPGIYGGAPARPYQEIHRQVAKIRGLPKLEERLGMLEEKVKGLSAQSEEAQITP</sequence>
<name>LPXD_CHLFF</name>
<dbReference type="EC" id="2.3.1.191" evidence="1"/>
<dbReference type="EMBL" id="AP006861">
    <property type="protein sequence ID" value="BAE81299.1"/>
    <property type="molecule type" value="Genomic_DNA"/>
</dbReference>
<dbReference type="RefSeq" id="WP_011458079.1">
    <property type="nucleotide sequence ID" value="NC_007899.1"/>
</dbReference>
<dbReference type="SMR" id="Q254I9"/>
<dbReference type="STRING" id="264202.CF0527"/>
<dbReference type="KEGG" id="cfe:CF0527"/>
<dbReference type="eggNOG" id="COG1044">
    <property type="taxonomic scope" value="Bacteria"/>
</dbReference>
<dbReference type="HOGENOM" id="CLU_049865_0_0_0"/>
<dbReference type="OrthoDB" id="9784739at2"/>
<dbReference type="UniPathway" id="UPA00973"/>
<dbReference type="Proteomes" id="UP000001260">
    <property type="component" value="Chromosome"/>
</dbReference>
<dbReference type="GO" id="GO:0016020">
    <property type="term" value="C:membrane"/>
    <property type="evidence" value="ECO:0007669"/>
    <property type="project" value="GOC"/>
</dbReference>
<dbReference type="GO" id="GO:0016410">
    <property type="term" value="F:N-acyltransferase activity"/>
    <property type="evidence" value="ECO:0007669"/>
    <property type="project" value="InterPro"/>
</dbReference>
<dbReference type="GO" id="GO:0009245">
    <property type="term" value="P:lipid A biosynthetic process"/>
    <property type="evidence" value="ECO:0007669"/>
    <property type="project" value="UniProtKB-UniRule"/>
</dbReference>
<dbReference type="CDD" id="cd03352">
    <property type="entry name" value="LbH_LpxD"/>
    <property type="match status" value="1"/>
</dbReference>
<dbReference type="Gene3D" id="1.20.5.170">
    <property type="match status" value="1"/>
</dbReference>
<dbReference type="Gene3D" id="2.160.10.10">
    <property type="entry name" value="Hexapeptide repeat proteins"/>
    <property type="match status" value="1"/>
</dbReference>
<dbReference type="Gene3D" id="3.40.1390.10">
    <property type="entry name" value="MurE/MurF, N-terminal domain"/>
    <property type="match status" value="1"/>
</dbReference>
<dbReference type="HAMAP" id="MF_00523">
    <property type="entry name" value="LpxD"/>
    <property type="match status" value="1"/>
</dbReference>
<dbReference type="InterPro" id="IPR001451">
    <property type="entry name" value="Hexapep"/>
</dbReference>
<dbReference type="InterPro" id="IPR007691">
    <property type="entry name" value="LpxD"/>
</dbReference>
<dbReference type="InterPro" id="IPR011004">
    <property type="entry name" value="Trimer_LpxA-like_sf"/>
</dbReference>
<dbReference type="InterPro" id="IPR020573">
    <property type="entry name" value="UDP_GlcNAc_AcTrfase_non-rep"/>
</dbReference>
<dbReference type="NCBIfam" id="TIGR01853">
    <property type="entry name" value="lipid_A_lpxD"/>
    <property type="match status" value="1"/>
</dbReference>
<dbReference type="NCBIfam" id="NF002060">
    <property type="entry name" value="PRK00892.1"/>
    <property type="match status" value="1"/>
</dbReference>
<dbReference type="PANTHER" id="PTHR43378">
    <property type="entry name" value="UDP-3-O-ACYLGLUCOSAMINE N-ACYLTRANSFERASE"/>
    <property type="match status" value="1"/>
</dbReference>
<dbReference type="PANTHER" id="PTHR43378:SF2">
    <property type="entry name" value="UDP-3-O-ACYLGLUCOSAMINE N-ACYLTRANSFERASE 1, MITOCHONDRIAL-RELATED"/>
    <property type="match status" value="1"/>
</dbReference>
<dbReference type="Pfam" id="PF00132">
    <property type="entry name" value="Hexapep"/>
    <property type="match status" value="3"/>
</dbReference>
<dbReference type="Pfam" id="PF04613">
    <property type="entry name" value="LpxD"/>
    <property type="match status" value="1"/>
</dbReference>
<dbReference type="SUPFAM" id="SSF51161">
    <property type="entry name" value="Trimeric LpxA-like enzymes"/>
    <property type="match status" value="1"/>
</dbReference>
<keyword id="KW-0012">Acyltransferase</keyword>
<keyword id="KW-0441">Lipid A biosynthesis</keyword>
<keyword id="KW-0444">Lipid biosynthesis</keyword>
<keyword id="KW-0443">Lipid metabolism</keyword>
<keyword id="KW-0677">Repeat</keyword>
<keyword id="KW-0808">Transferase</keyword>
<proteinExistence type="inferred from homology"/>
<reference key="1">
    <citation type="journal article" date="2006" name="DNA Res.">
        <title>Genome sequence of the cat pathogen, Chlamydophila felis.</title>
        <authorList>
            <person name="Azuma Y."/>
            <person name="Hirakawa H."/>
            <person name="Yamashita A."/>
            <person name="Cai Y."/>
            <person name="Rahman M.A."/>
            <person name="Suzuki H."/>
            <person name="Mitaku S."/>
            <person name="Toh H."/>
            <person name="Goto S."/>
            <person name="Murakami T."/>
            <person name="Sugi K."/>
            <person name="Hayashi H."/>
            <person name="Fukushi H."/>
            <person name="Hattori M."/>
            <person name="Kuhara S."/>
            <person name="Shirai M."/>
        </authorList>
    </citation>
    <scope>NUCLEOTIDE SEQUENCE [LARGE SCALE GENOMIC DNA]</scope>
    <source>
        <strain>Fe/C-56</strain>
    </source>
</reference>
<gene>
    <name evidence="1" type="primary">lpxD</name>
    <name type="ordered locus">CF0527</name>
</gene>
<organism>
    <name type="scientific">Chlamydia felis (strain Fe/C-56)</name>
    <name type="common">Chlamydophila felis</name>
    <dbReference type="NCBI Taxonomy" id="264202"/>
    <lineage>
        <taxon>Bacteria</taxon>
        <taxon>Pseudomonadati</taxon>
        <taxon>Chlamydiota</taxon>
        <taxon>Chlamydiia</taxon>
        <taxon>Chlamydiales</taxon>
        <taxon>Chlamydiaceae</taxon>
        <taxon>Chlamydia/Chlamydophila group</taxon>
        <taxon>Chlamydia</taxon>
    </lineage>
</organism>
<evidence type="ECO:0000255" key="1">
    <source>
        <dbReference type="HAMAP-Rule" id="MF_00523"/>
    </source>
</evidence>
<comment type="function">
    <text evidence="1">Catalyzes the N-acylation of UDP-3-O-acylglucosamine using 3-hydroxyacyl-ACP as the acyl donor. Is involved in the biosynthesis of lipid A, a phosphorylated glycolipid that anchors the lipopolysaccharide to the outer membrane of the cell.</text>
</comment>
<comment type="catalytic activity">
    <reaction evidence="1">
        <text>a UDP-3-O-[(3R)-3-hydroxyacyl]-alpha-D-glucosamine + a (3R)-hydroxyacyl-[ACP] = a UDP-2-N,3-O-bis[(3R)-3-hydroxyacyl]-alpha-D-glucosamine + holo-[ACP] + H(+)</text>
        <dbReference type="Rhea" id="RHEA:53836"/>
        <dbReference type="Rhea" id="RHEA-COMP:9685"/>
        <dbReference type="Rhea" id="RHEA-COMP:9945"/>
        <dbReference type="ChEBI" id="CHEBI:15378"/>
        <dbReference type="ChEBI" id="CHEBI:64479"/>
        <dbReference type="ChEBI" id="CHEBI:78827"/>
        <dbReference type="ChEBI" id="CHEBI:137740"/>
        <dbReference type="ChEBI" id="CHEBI:137748"/>
        <dbReference type="EC" id="2.3.1.191"/>
    </reaction>
</comment>
<comment type="pathway">
    <text evidence="1">Bacterial outer membrane biogenesis; LPS lipid A biosynthesis.</text>
</comment>
<comment type="subunit">
    <text evidence="1">Homotrimer.</text>
</comment>
<comment type="similarity">
    <text evidence="1">Belongs to the transferase hexapeptide repeat family. LpxD subfamily.</text>
</comment>
<feature type="chain" id="PRO_0000264358" description="UDP-3-O-acylglucosamine N-acyltransferase">
    <location>
        <begin position="1"/>
        <end position="359"/>
    </location>
</feature>
<feature type="active site" description="Proton acceptor" evidence="1">
    <location>
        <position position="248"/>
    </location>
</feature>